<name>BCAP_HUMAN</name>
<dbReference type="EMBL" id="AK092883">
    <property type="protein sequence ID" value="BAC03996.1"/>
    <property type="molecule type" value="mRNA"/>
</dbReference>
<dbReference type="EMBL" id="AK125635">
    <property type="protein sequence ID" value="BAC86227.1"/>
    <property type="molecule type" value="mRNA"/>
</dbReference>
<dbReference type="EMBL" id="BX648550">
    <property type="status" value="NOT_ANNOTATED_CDS"/>
    <property type="molecule type" value="mRNA"/>
</dbReference>
<dbReference type="EMBL" id="AL358235">
    <property type="status" value="NOT_ANNOTATED_CDS"/>
    <property type="molecule type" value="Genomic_DNA"/>
</dbReference>
<dbReference type="EMBL" id="AL591364">
    <property type="status" value="NOT_ANNOTATED_CDS"/>
    <property type="molecule type" value="Genomic_DNA"/>
</dbReference>
<dbReference type="EMBL" id="AL138765">
    <property type="status" value="NOT_ANNOTATED_CDS"/>
    <property type="molecule type" value="Genomic_DNA"/>
</dbReference>
<dbReference type="EMBL" id="BC029917">
    <property type="protein sequence ID" value="AAH29917.1"/>
    <property type="molecule type" value="mRNA"/>
</dbReference>
<dbReference type="CCDS" id="CCDS31259.1">
    <molecule id="Q6ZUJ8-1"/>
</dbReference>
<dbReference type="RefSeq" id="NP_689522.2">
    <molecule id="Q6ZUJ8-1"/>
    <property type="nucleotide sequence ID" value="NM_152309.2"/>
</dbReference>
<dbReference type="RefSeq" id="XP_005269555.1">
    <property type="nucleotide sequence ID" value="XM_005269498.1"/>
</dbReference>
<dbReference type="RefSeq" id="XP_005269556.1">
    <molecule id="Q6ZUJ8-2"/>
    <property type="nucleotide sequence ID" value="XM_005269499.2"/>
</dbReference>
<dbReference type="RefSeq" id="XP_047280522.1">
    <molecule id="Q6ZUJ8-2"/>
    <property type="nucleotide sequence ID" value="XM_047424566.1"/>
</dbReference>
<dbReference type="RefSeq" id="XP_054220693.1">
    <molecule id="Q6ZUJ8-2"/>
    <property type="nucleotide sequence ID" value="XM_054364718.1"/>
</dbReference>
<dbReference type="RefSeq" id="XP_054220694.1">
    <molecule id="Q6ZUJ8-2"/>
    <property type="nucleotide sequence ID" value="XM_054364719.1"/>
</dbReference>
<dbReference type="RefSeq" id="XP_054220695.1">
    <molecule id="Q6ZUJ8-2"/>
    <property type="nucleotide sequence ID" value="XM_054364720.1"/>
</dbReference>
<dbReference type="RefSeq" id="XP_054220696.1">
    <molecule id="Q6ZUJ8-2"/>
    <property type="nucleotide sequence ID" value="XM_054364721.1"/>
</dbReference>
<dbReference type="PDB" id="5FOR">
    <property type="method" value="X-ray"/>
    <property type="resolution" value="2.50 A"/>
    <property type="chains" value="A=7-142"/>
</dbReference>
<dbReference type="PDB" id="6SWS">
    <property type="method" value="X-ray"/>
    <property type="resolution" value="3.00 A"/>
    <property type="chains" value="A/B/C/D/E=179-288"/>
</dbReference>
<dbReference type="PDBsum" id="5FOR"/>
<dbReference type="PDBsum" id="6SWS"/>
<dbReference type="SMR" id="Q6ZUJ8"/>
<dbReference type="BioGRID" id="125621">
    <property type="interactions" value="27"/>
</dbReference>
<dbReference type="FunCoup" id="Q6ZUJ8">
    <property type="interactions" value="1131"/>
</dbReference>
<dbReference type="IntAct" id="Q6ZUJ8">
    <property type="interactions" value="12"/>
</dbReference>
<dbReference type="MINT" id="Q6ZUJ8"/>
<dbReference type="STRING" id="9606.ENSP00000339826"/>
<dbReference type="iPTMnet" id="Q6ZUJ8"/>
<dbReference type="PhosphoSitePlus" id="Q6ZUJ8"/>
<dbReference type="BioMuta" id="PIK3AP1"/>
<dbReference type="DMDM" id="205830907"/>
<dbReference type="jPOST" id="Q6ZUJ8"/>
<dbReference type="MassIVE" id="Q6ZUJ8"/>
<dbReference type="PaxDb" id="9606-ENSP00000339826"/>
<dbReference type="PeptideAtlas" id="Q6ZUJ8"/>
<dbReference type="ProteomicsDB" id="68334">
    <molecule id="Q6ZUJ8-1"/>
</dbReference>
<dbReference type="ProteomicsDB" id="68335">
    <molecule id="Q6ZUJ8-2"/>
</dbReference>
<dbReference type="ProteomicsDB" id="68336">
    <molecule id="Q6ZUJ8-3"/>
</dbReference>
<dbReference type="Pumba" id="Q6ZUJ8"/>
<dbReference type="Antibodypedia" id="30771">
    <property type="antibodies" value="381 antibodies from 23 providers"/>
</dbReference>
<dbReference type="DNASU" id="118788"/>
<dbReference type="Ensembl" id="ENST00000339364.10">
    <molecule id="Q6ZUJ8-1"/>
    <property type="protein sequence ID" value="ENSP00000339826.5"/>
    <property type="gene ID" value="ENSG00000155629.15"/>
</dbReference>
<dbReference type="Ensembl" id="ENST00000371109.3">
    <molecule id="Q6ZUJ8-3"/>
    <property type="protein sequence ID" value="ENSP00000360150.3"/>
    <property type="gene ID" value="ENSG00000155629.15"/>
</dbReference>
<dbReference type="Ensembl" id="ENST00000371110.6">
    <molecule id="Q6ZUJ8-2"/>
    <property type="protein sequence ID" value="ENSP00000360151.2"/>
    <property type="gene ID" value="ENSG00000155629.15"/>
</dbReference>
<dbReference type="GeneID" id="118788"/>
<dbReference type="KEGG" id="hsa:118788"/>
<dbReference type="MANE-Select" id="ENST00000339364.10">
    <property type="protein sequence ID" value="ENSP00000339826.5"/>
    <property type="RefSeq nucleotide sequence ID" value="NM_152309.3"/>
    <property type="RefSeq protein sequence ID" value="NP_689522.2"/>
</dbReference>
<dbReference type="UCSC" id="uc001kmo.4">
    <molecule id="Q6ZUJ8-1"/>
    <property type="organism name" value="human"/>
</dbReference>
<dbReference type="AGR" id="HGNC:30034"/>
<dbReference type="CTD" id="118788"/>
<dbReference type="DisGeNET" id="118788"/>
<dbReference type="GeneCards" id="PIK3AP1"/>
<dbReference type="HGNC" id="HGNC:30034">
    <property type="gene designation" value="PIK3AP1"/>
</dbReference>
<dbReference type="HPA" id="ENSG00000155629">
    <property type="expression patterns" value="Tissue enhanced (liver, lymphoid tissue, salivary gland)"/>
</dbReference>
<dbReference type="MalaCards" id="PIK3AP1"/>
<dbReference type="MIM" id="607942">
    <property type="type" value="gene"/>
</dbReference>
<dbReference type="neXtProt" id="NX_Q6ZUJ8"/>
<dbReference type="OpenTargets" id="ENSG00000155629"/>
<dbReference type="PharmGKB" id="PA134979629"/>
<dbReference type="VEuPathDB" id="HostDB:ENSG00000155629"/>
<dbReference type="eggNOG" id="ENOG502QS94">
    <property type="taxonomic scope" value="Eukaryota"/>
</dbReference>
<dbReference type="GeneTree" id="ENSGT00390000008787"/>
<dbReference type="HOGENOM" id="CLU_012993_0_0_1"/>
<dbReference type="InParanoid" id="Q6ZUJ8"/>
<dbReference type="OMA" id="YYTSMGE"/>
<dbReference type="OrthoDB" id="8192811at2759"/>
<dbReference type="PAN-GO" id="Q6ZUJ8">
    <property type="GO annotations" value="3 GO annotations based on evolutionary models"/>
</dbReference>
<dbReference type="PhylomeDB" id="Q6ZUJ8"/>
<dbReference type="TreeFam" id="TF328570"/>
<dbReference type="PathwayCommons" id="Q6ZUJ8"/>
<dbReference type="Reactome" id="R-HSA-1257604">
    <property type="pathway name" value="PIP3 activates AKT signaling"/>
</dbReference>
<dbReference type="Reactome" id="R-HSA-2219530">
    <property type="pathway name" value="Constitutive Signaling by Aberrant PI3K in Cancer"/>
</dbReference>
<dbReference type="Reactome" id="R-HSA-6811558">
    <property type="pathway name" value="PI5P, PP2A and IER3 Regulate PI3K/AKT Signaling"/>
</dbReference>
<dbReference type="Reactome" id="R-HSA-983695">
    <property type="pathway name" value="Antigen activates B Cell Receptor (BCR) leading to generation of second messengers"/>
</dbReference>
<dbReference type="SignaLink" id="Q6ZUJ8"/>
<dbReference type="SIGNOR" id="Q6ZUJ8"/>
<dbReference type="BioGRID-ORCS" id="118788">
    <property type="hits" value="17 hits in 1158 CRISPR screens"/>
</dbReference>
<dbReference type="ChiTaRS" id="PIK3AP1">
    <property type="organism name" value="human"/>
</dbReference>
<dbReference type="GeneWiki" id="PIK3AP1"/>
<dbReference type="GenomeRNAi" id="118788"/>
<dbReference type="Pharos" id="Q6ZUJ8">
    <property type="development level" value="Tbio"/>
</dbReference>
<dbReference type="PRO" id="PR:Q6ZUJ8"/>
<dbReference type="Proteomes" id="UP000005640">
    <property type="component" value="Chromosome 10"/>
</dbReference>
<dbReference type="RNAct" id="Q6ZUJ8">
    <property type="molecule type" value="protein"/>
</dbReference>
<dbReference type="Bgee" id="ENSG00000155629">
    <property type="expression patterns" value="Expressed in parotid gland and 153 other cell types or tissues"/>
</dbReference>
<dbReference type="GO" id="GO:0005829">
    <property type="term" value="C:cytosol"/>
    <property type="evidence" value="ECO:0000250"/>
    <property type="project" value="UniProtKB"/>
</dbReference>
<dbReference type="GO" id="GO:0016020">
    <property type="term" value="C:membrane"/>
    <property type="evidence" value="ECO:0000250"/>
    <property type="project" value="UniProtKB"/>
</dbReference>
<dbReference type="GO" id="GO:0005886">
    <property type="term" value="C:plasma membrane"/>
    <property type="evidence" value="ECO:0000304"/>
    <property type="project" value="Reactome"/>
</dbReference>
<dbReference type="GO" id="GO:0042802">
    <property type="term" value="F:identical protein binding"/>
    <property type="evidence" value="ECO:0007669"/>
    <property type="project" value="Ensembl"/>
</dbReference>
<dbReference type="GO" id="GO:0036312">
    <property type="term" value="F:phosphatidylinositol 3-kinase regulatory subunit binding"/>
    <property type="evidence" value="ECO:0000250"/>
    <property type="project" value="UniProtKB"/>
</dbReference>
<dbReference type="GO" id="GO:0005102">
    <property type="term" value="F:signaling receptor binding"/>
    <property type="evidence" value="ECO:0000318"/>
    <property type="project" value="GO_Central"/>
</dbReference>
<dbReference type="GO" id="GO:0051897">
    <property type="term" value="P:positive regulation of phosphatidylinositol 3-kinase/protein kinase B signal transduction"/>
    <property type="evidence" value="ECO:0000250"/>
    <property type="project" value="UniProtKB"/>
</dbReference>
<dbReference type="GO" id="GO:0050727">
    <property type="term" value="P:regulation of inflammatory response"/>
    <property type="evidence" value="ECO:0000250"/>
    <property type="project" value="UniProtKB"/>
</dbReference>
<dbReference type="GO" id="GO:0034134">
    <property type="term" value="P:toll-like receptor 2 signaling pathway"/>
    <property type="evidence" value="ECO:0000250"/>
    <property type="project" value="UniProtKB"/>
</dbReference>
<dbReference type="GO" id="GO:0034142">
    <property type="term" value="P:toll-like receptor 4 signaling pathway"/>
    <property type="evidence" value="ECO:0000250"/>
    <property type="project" value="UniProtKB"/>
</dbReference>
<dbReference type="GO" id="GO:0034154">
    <property type="term" value="P:toll-like receptor 7 signaling pathway"/>
    <property type="evidence" value="ECO:0000250"/>
    <property type="project" value="UniProtKB"/>
</dbReference>
<dbReference type="GO" id="GO:0034162">
    <property type="term" value="P:toll-like receptor 9 signaling pathway"/>
    <property type="evidence" value="ECO:0000250"/>
    <property type="project" value="UniProtKB"/>
</dbReference>
<dbReference type="FunFam" id="3.40.50.10140:FF:000010">
    <property type="entry name" value="phosphoinositide 3-kinase adapter protein 1"/>
    <property type="match status" value="1"/>
</dbReference>
<dbReference type="Gene3D" id="3.40.50.10140">
    <property type="entry name" value="Toll/interleukin-1 receptor homology (TIR) domain"/>
    <property type="match status" value="1"/>
</dbReference>
<dbReference type="InterPro" id="IPR052446">
    <property type="entry name" value="B-cell_PI3K-Signaling_Adptrs"/>
</dbReference>
<dbReference type="InterPro" id="IPR017893">
    <property type="entry name" value="DBB_domain"/>
</dbReference>
<dbReference type="InterPro" id="IPR041340">
    <property type="entry name" value="PIK3AP1_TIR"/>
</dbReference>
<dbReference type="InterPro" id="IPR000157">
    <property type="entry name" value="TIR_dom"/>
</dbReference>
<dbReference type="InterPro" id="IPR035897">
    <property type="entry name" value="Toll_tir_struct_dom_sf"/>
</dbReference>
<dbReference type="PANTHER" id="PTHR16267">
    <property type="entry name" value="BANK1/PIK3AP1 FAMILY MEMBER"/>
    <property type="match status" value="1"/>
</dbReference>
<dbReference type="PANTHER" id="PTHR16267:SF12">
    <property type="entry name" value="PHOSPHOINOSITIDE 3-KINASE ADAPTER PROTEIN 1"/>
    <property type="match status" value="1"/>
</dbReference>
<dbReference type="Pfam" id="PF14545">
    <property type="entry name" value="DBB"/>
    <property type="match status" value="1"/>
</dbReference>
<dbReference type="Pfam" id="PF18567">
    <property type="entry name" value="TIR_3"/>
    <property type="match status" value="1"/>
</dbReference>
<dbReference type="SMART" id="SM01282">
    <property type="entry name" value="DBB"/>
    <property type="match status" value="1"/>
</dbReference>
<dbReference type="PROSITE" id="PS51376">
    <property type="entry name" value="DBB"/>
    <property type="match status" value="1"/>
</dbReference>
<dbReference type="PROSITE" id="PS50104">
    <property type="entry name" value="TIR"/>
    <property type="match status" value="1"/>
</dbReference>
<reference key="1">
    <citation type="journal article" date="2004" name="Nat. Genet.">
        <title>Complete sequencing and characterization of 21,243 full-length human cDNAs.</title>
        <authorList>
            <person name="Ota T."/>
            <person name="Suzuki Y."/>
            <person name="Nishikawa T."/>
            <person name="Otsuki T."/>
            <person name="Sugiyama T."/>
            <person name="Irie R."/>
            <person name="Wakamatsu A."/>
            <person name="Hayashi K."/>
            <person name="Sato H."/>
            <person name="Nagai K."/>
            <person name="Kimura K."/>
            <person name="Makita H."/>
            <person name="Sekine M."/>
            <person name="Obayashi M."/>
            <person name="Nishi T."/>
            <person name="Shibahara T."/>
            <person name="Tanaka T."/>
            <person name="Ishii S."/>
            <person name="Yamamoto J."/>
            <person name="Saito K."/>
            <person name="Kawai Y."/>
            <person name="Isono Y."/>
            <person name="Nakamura Y."/>
            <person name="Nagahari K."/>
            <person name="Murakami K."/>
            <person name="Yasuda T."/>
            <person name="Iwayanagi T."/>
            <person name="Wagatsuma M."/>
            <person name="Shiratori A."/>
            <person name="Sudo H."/>
            <person name="Hosoiri T."/>
            <person name="Kaku Y."/>
            <person name="Kodaira H."/>
            <person name="Kondo H."/>
            <person name="Sugawara M."/>
            <person name="Takahashi M."/>
            <person name="Kanda K."/>
            <person name="Yokoi T."/>
            <person name="Furuya T."/>
            <person name="Kikkawa E."/>
            <person name="Omura Y."/>
            <person name="Abe K."/>
            <person name="Kamihara K."/>
            <person name="Katsuta N."/>
            <person name="Sato K."/>
            <person name="Tanikawa M."/>
            <person name="Yamazaki M."/>
            <person name="Ninomiya K."/>
            <person name="Ishibashi T."/>
            <person name="Yamashita H."/>
            <person name="Murakawa K."/>
            <person name="Fujimori K."/>
            <person name="Tanai H."/>
            <person name="Kimata M."/>
            <person name="Watanabe M."/>
            <person name="Hiraoka S."/>
            <person name="Chiba Y."/>
            <person name="Ishida S."/>
            <person name="Ono Y."/>
            <person name="Takiguchi S."/>
            <person name="Watanabe S."/>
            <person name="Yosida M."/>
            <person name="Hotuta T."/>
            <person name="Kusano J."/>
            <person name="Kanehori K."/>
            <person name="Takahashi-Fujii A."/>
            <person name="Hara H."/>
            <person name="Tanase T.-O."/>
            <person name="Nomura Y."/>
            <person name="Togiya S."/>
            <person name="Komai F."/>
            <person name="Hara R."/>
            <person name="Takeuchi K."/>
            <person name="Arita M."/>
            <person name="Imose N."/>
            <person name="Musashino K."/>
            <person name="Yuuki H."/>
            <person name="Oshima A."/>
            <person name="Sasaki N."/>
            <person name="Aotsuka S."/>
            <person name="Yoshikawa Y."/>
            <person name="Matsunawa H."/>
            <person name="Ichihara T."/>
            <person name="Shiohata N."/>
            <person name="Sano S."/>
            <person name="Moriya S."/>
            <person name="Momiyama H."/>
            <person name="Satoh N."/>
            <person name="Takami S."/>
            <person name="Terashima Y."/>
            <person name="Suzuki O."/>
            <person name="Nakagawa S."/>
            <person name="Senoh A."/>
            <person name="Mizoguchi H."/>
            <person name="Goto Y."/>
            <person name="Shimizu F."/>
            <person name="Wakebe H."/>
            <person name="Hishigaki H."/>
            <person name="Watanabe T."/>
            <person name="Sugiyama A."/>
            <person name="Takemoto M."/>
            <person name="Kawakami B."/>
            <person name="Yamazaki M."/>
            <person name="Watanabe K."/>
            <person name="Kumagai A."/>
            <person name="Itakura S."/>
            <person name="Fukuzumi Y."/>
            <person name="Fujimori Y."/>
            <person name="Komiyama M."/>
            <person name="Tashiro H."/>
            <person name="Tanigami A."/>
            <person name="Fujiwara T."/>
            <person name="Ono T."/>
            <person name="Yamada K."/>
            <person name="Fujii Y."/>
            <person name="Ozaki K."/>
            <person name="Hirao M."/>
            <person name="Ohmori Y."/>
            <person name="Kawabata A."/>
            <person name="Hikiji T."/>
            <person name="Kobatake N."/>
            <person name="Inagaki H."/>
            <person name="Ikema Y."/>
            <person name="Okamoto S."/>
            <person name="Okitani R."/>
            <person name="Kawakami T."/>
            <person name="Noguchi S."/>
            <person name="Itoh T."/>
            <person name="Shigeta K."/>
            <person name="Senba T."/>
            <person name="Matsumura K."/>
            <person name="Nakajima Y."/>
            <person name="Mizuno T."/>
            <person name="Morinaga M."/>
            <person name="Sasaki M."/>
            <person name="Togashi T."/>
            <person name="Oyama M."/>
            <person name="Hata H."/>
            <person name="Watanabe M."/>
            <person name="Komatsu T."/>
            <person name="Mizushima-Sugano J."/>
            <person name="Satoh T."/>
            <person name="Shirai Y."/>
            <person name="Takahashi Y."/>
            <person name="Nakagawa K."/>
            <person name="Okumura K."/>
            <person name="Nagase T."/>
            <person name="Nomura N."/>
            <person name="Kikuchi H."/>
            <person name="Masuho Y."/>
            <person name="Yamashita R."/>
            <person name="Nakai K."/>
            <person name="Yada T."/>
            <person name="Nakamura Y."/>
            <person name="Ohara O."/>
            <person name="Isogai T."/>
            <person name="Sugano S."/>
        </authorList>
    </citation>
    <scope>NUCLEOTIDE SEQUENCE [LARGE SCALE MRNA] (ISOFORMS 1 AND 2)</scope>
    <scope>VARIANT LYS-21</scope>
    <source>
        <tissue>Spleen</tissue>
        <tissue>Synovium</tissue>
    </source>
</reference>
<reference key="2">
    <citation type="journal article" date="2007" name="BMC Genomics">
        <title>The full-ORF clone resource of the German cDNA consortium.</title>
        <authorList>
            <person name="Bechtel S."/>
            <person name="Rosenfelder H."/>
            <person name="Duda A."/>
            <person name="Schmidt C.P."/>
            <person name="Ernst U."/>
            <person name="Wellenreuther R."/>
            <person name="Mehrle A."/>
            <person name="Schuster C."/>
            <person name="Bahr A."/>
            <person name="Bloecker H."/>
            <person name="Heubner D."/>
            <person name="Hoerlein A."/>
            <person name="Michel G."/>
            <person name="Wedler H."/>
            <person name="Koehrer K."/>
            <person name="Ottenwaelder B."/>
            <person name="Poustka A."/>
            <person name="Wiemann S."/>
            <person name="Schupp I."/>
        </authorList>
    </citation>
    <scope>NUCLEOTIDE SEQUENCE [LARGE SCALE MRNA] (ISOFORM 1)</scope>
    <scope>VARIANT SER-83</scope>
    <source>
        <tissue>Fetal liver</tissue>
    </source>
</reference>
<reference key="3">
    <citation type="journal article" date="2004" name="Nature">
        <title>The DNA sequence and comparative analysis of human chromosome 10.</title>
        <authorList>
            <person name="Deloukas P."/>
            <person name="Earthrowl M.E."/>
            <person name="Grafham D.V."/>
            <person name="Rubenfield M."/>
            <person name="French L."/>
            <person name="Steward C.A."/>
            <person name="Sims S.K."/>
            <person name="Jones M.C."/>
            <person name="Searle S."/>
            <person name="Scott C."/>
            <person name="Howe K."/>
            <person name="Hunt S.E."/>
            <person name="Andrews T.D."/>
            <person name="Gilbert J.G.R."/>
            <person name="Swarbreck D."/>
            <person name="Ashurst J.L."/>
            <person name="Taylor A."/>
            <person name="Battles J."/>
            <person name="Bird C.P."/>
            <person name="Ainscough R."/>
            <person name="Almeida J.P."/>
            <person name="Ashwell R.I.S."/>
            <person name="Ambrose K.D."/>
            <person name="Babbage A.K."/>
            <person name="Bagguley C.L."/>
            <person name="Bailey J."/>
            <person name="Banerjee R."/>
            <person name="Bates K."/>
            <person name="Beasley H."/>
            <person name="Bray-Allen S."/>
            <person name="Brown A.J."/>
            <person name="Brown J.Y."/>
            <person name="Burford D.C."/>
            <person name="Burrill W."/>
            <person name="Burton J."/>
            <person name="Cahill P."/>
            <person name="Camire D."/>
            <person name="Carter N.P."/>
            <person name="Chapman J.C."/>
            <person name="Clark S.Y."/>
            <person name="Clarke G."/>
            <person name="Clee C.M."/>
            <person name="Clegg S."/>
            <person name="Corby N."/>
            <person name="Coulson A."/>
            <person name="Dhami P."/>
            <person name="Dutta I."/>
            <person name="Dunn M."/>
            <person name="Faulkner L."/>
            <person name="Frankish A."/>
            <person name="Frankland J.A."/>
            <person name="Garner P."/>
            <person name="Garnett J."/>
            <person name="Gribble S."/>
            <person name="Griffiths C."/>
            <person name="Grocock R."/>
            <person name="Gustafson E."/>
            <person name="Hammond S."/>
            <person name="Harley J.L."/>
            <person name="Hart E."/>
            <person name="Heath P.D."/>
            <person name="Ho T.P."/>
            <person name="Hopkins B."/>
            <person name="Horne J."/>
            <person name="Howden P.J."/>
            <person name="Huckle E."/>
            <person name="Hynds C."/>
            <person name="Johnson C."/>
            <person name="Johnson D."/>
            <person name="Kana A."/>
            <person name="Kay M."/>
            <person name="Kimberley A.M."/>
            <person name="Kershaw J.K."/>
            <person name="Kokkinaki M."/>
            <person name="Laird G.K."/>
            <person name="Lawlor S."/>
            <person name="Lee H.M."/>
            <person name="Leongamornlert D.A."/>
            <person name="Laird G."/>
            <person name="Lloyd C."/>
            <person name="Lloyd D.M."/>
            <person name="Loveland J."/>
            <person name="Lovell J."/>
            <person name="McLaren S."/>
            <person name="McLay K.E."/>
            <person name="McMurray A."/>
            <person name="Mashreghi-Mohammadi M."/>
            <person name="Matthews L."/>
            <person name="Milne S."/>
            <person name="Nickerson T."/>
            <person name="Nguyen M."/>
            <person name="Overton-Larty E."/>
            <person name="Palmer S.A."/>
            <person name="Pearce A.V."/>
            <person name="Peck A.I."/>
            <person name="Pelan S."/>
            <person name="Phillimore B."/>
            <person name="Porter K."/>
            <person name="Rice C.M."/>
            <person name="Rogosin A."/>
            <person name="Ross M.T."/>
            <person name="Sarafidou T."/>
            <person name="Sehra H.K."/>
            <person name="Shownkeen R."/>
            <person name="Skuce C.D."/>
            <person name="Smith M."/>
            <person name="Standring L."/>
            <person name="Sycamore N."/>
            <person name="Tester J."/>
            <person name="Thorpe A."/>
            <person name="Torcasso W."/>
            <person name="Tracey A."/>
            <person name="Tromans A."/>
            <person name="Tsolas J."/>
            <person name="Wall M."/>
            <person name="Walsh J."/>
            <person name="Wang H."/>
            <person name="Weinstock K."/>
            <person name="West A.P."/>
            <person name="Willey D.L."/>
            <person name="Whitehead S.L."/>
            <person name="Wilming L."/>
            <person name="Wray P.W."/>
            <person name="Young L."/>
            <person name="Chen Y."/>
            <person name="Lovering R.C."/>
            <person name="Moschonas N.K."/>
            <person name="Siebert R."/>
            <person name="Fechtel K."/>
            <person name="Bentley D."/>
            <person name="Durbin R.M."/>
            <person name="Hubbard T."/>
            <person name="Doucette-Stamm L."/>
            <person name="Beck S."/>
            <person name="Smith D.R."/>
            <person name="Rogers J."/>
        </authorList>
    </citation>
    <scope>NUCLEOTIDE SEQUENCE [LARGE SCALE GENOMIC DNA]</scope>
</reference>
<reference key="4">
    <citation type="journal article" date="2004" name="Genome Res.">
        <title>The status, quality, and expansion of the NIH full-length cDNA project: the Mammalian Gene Collection (MGC).</title>
        <authorList>
            <consortium name="The MGC Project Team"/>
        </authorList>
    </citation>
    <scope>NUCLEOTIDE SEQUENCE [LARGE SCALE MRNA] (ISOFORM 3)</scope>
    <source>
        <tissue>Brain</tissue>
    </source>
</reference>
<reference key="5">
    <citation type="journal article" date="2005" name="FEBS Lett.">
        <title>Identification of B cell adaptor for PI3-kinase (BCAP) as an Abl interactor 1-regulated substrate of Abl kinases.</title>
        <authorList>
            <person name="Maruoka M."/>
            <person name="Suzuki J."/>
            <person name="Kawata S."/>
            <person name="Yoshida K."/>
            <person name="Hirao N."/>
            <person name="Sato S."/>
            <person name="Goff S.P."/>
            <person name="Takeya T."/>
            <person name="Tani K."/>
            <person name="Shishido T."/>
        </authorList>
    </citation>
    <scope>FUNCTION</scope>
    <scope>INTERACTION WITH ABI1</scope>
    <scope>PHOSPHORYLATION AT TYR-513; TYR-553; TYR-570; TYR-594 AND TYR-694</scope>
</reference>
<reference key="6">
    <citation type="journal article" date="2008" name="Blood">
        <title>Enhanced NK cell development and function in BCAP-deficient mice.</title>
        <authorList>
            <person name="Macfarlane A.W. IV"/>
            <person name="Yamazaki T."/>
            <person name="Fang M."/>
            <person name="Sigal L.J."/>
            <person name="Kurosaki T."/>
            <person name="Campbell K.S."/>
        </authorList>
    </citation>
    <scope>INTERACTION WITH PIK3R1</scope>
    <scope>TISSUE SPECIFICITY</scope>
</reference>
<reference key="7">
    <citation type="journal article" date="2013" name="J. Proteome Res.">
        <title>Toward a comprehensive characterization of a human cancer cell phosphoproteome.</title>
        <authorList>
            <person name="Zhou H."/>
            <person name="Di Palma S."/>
            <person name="Preisinger C."/>
            <person name="Peng M."/>
            <person name="Polat A.N."/>
            <person name="Heck A.J."/>
            <person name="Mohammed S."/>
        </authorList>
    </citation>
    <scope>PHOSPHORYLATION [LARGE SCALE ANALYSIS] AT SER-642</scope>
    <scope>IDENTIFICATION BY MASS SPECTROMETRY [LARGE SCALE ANALYSIS]</scope>
    <source>
        <tissue>Erythroleukemia</tissue>
    </source>
</reference>
<reference key="8">
    <citation type="journal article" date="2014" name="J. Proteomics">
        <title>An enzyme assisted RP-RPLC approach for in-depth analysis of human liver phosphoproteome.</title>
        <authorList>
            <person name="Bian Y."/>
            <person name="Song C."/>
            <person name="Cheng K."/>
            <person name="Dong M."/>
            <person name="Wang F."/>
            <person name="Huang J."/>
            <person name="Sun D."/>
            <person name="Wang L."/>
            <person name="Ye M."/>
            <person name="Zou H."/>
        </authorList>
    </citation>
    <scope>PHOSPHORYLATION [LARGE SCALE ANALYSIS] AT SER-718</scope>
    <scope>IDENTIFICATION BY MASS SPECTROMETRY [LARGE SCALE ANALYSIS]</scope>
    <source>
        <tissue>Liver</tissue>
    </source>
</reference>
<feature type="chain" id="PRO_0000341273" description="Phosphoinositide 3-kinase adapter protein 1">
    <location>
        <begin position="1"/>
        <end position="805"/>
    </location>
</feature>
<feature type="domain" description="TIR" evidence="4">
    <location>
        <begin position="8"/>
        <end position="145"/>
    </location>
</feature>
<feature type="domain" description="DBB" evidence="5">
    <location>
        <begin position="181"/>
        <end position="317"/>
    </location>
</feature>
<feature type="region of interest" description="Necessary and sufficient to mediate inhibition of NF-kappa-B downstream of activated TLRs; may mediate interaction with MYD88 and TIRAP" evidence="1">
    <location>
        <begin position="10"/>
        <end position="144"/>
    </location>
</feature>
<feature type="region of interest" description="Disordered" evidence="6">
    <location>
        <begin position="145"/>
        <end position="165"/>
    </location>
</feature>
<feature type="region of interest" description="Disordered" evidence="6">
    <location>
        <begin position="527"/>
        <end position="547"/>
    </location>
</feature>
<feature type="region of interest" description="Disordered" evidence="6">
    <location>
        <begin position="571"/>
        <end position="590"/>
    </location>
</feature>
<feature type="region of interest" description="Disordered" evidence="6">
    <location>
        <begin position="654"/>
        <end position="679"/>
    </location>
</feature>
<feature type="region of interest" description="Disordered" evidence="6">
    <location>
        <begin position="697"/>
        <end position="805"/>
    </location>
</feature>
<feature type="coiled-coil region" evidence="3">
    <location>
        <begin position="645"/>
        <end position="667"/>
    </location>
</feature>
<feature type="compositionally biased region" description="Basic and acidic residues" evidence="6">
    <location>
        <begin position="654"/>
        <end position="672"/>
    </location>
</feature>
<feature type="compositionally biased region" description="Basic and acidic residues" evidence="6">
    <location>
        <begin position="707"/>
        <end position="716"/>
    </location>
</feature>
<feature type="compositionally biased region" description="Low complexity" evidence="6">
    <location>
        <begin position="717"/>
        <end position="740"/>
    </location>
</feature>
<feature type="compositionally biased region" description="Pro residues" evidence="6">
    <location>
        <begin position="795"/>
        <end position="805"/>
    </location>
</feature>
<feature type="modified residue" description="Phosphotyrosine" evidence="2">
    <location>
        <position position="263"/>
    </location>
</feature>
<feature type="modified residue" description="Phosphotyrosine; by SYK" evidence="2">
    <location>
        <position position="419"/>
    </location>
</feature>
<feature type="modified residue" description="Phosphotyrosine; by SYK" evidence="2">
    <location>
        <position position="444"/>
    </location>
</feature>
<feature type="modified residue" description="Phosphotyrosine; by SYK" evidence="2">
    <location>
        <position position="459"/>
    </location>
</feature>
<feature type="modified residue" description="Phosphotyrosine; by ABL1" evidence="8">
    <location>
        <position position="513"/>
    </location>
</feature>
<feature type="modified residue" description="Phosphotyrosine; by ABL1" evidence="8">
    <location>
        <position position="553"/>
    </location>
</feature>
<feature type="modified residue" description="Phosphotyrosine; by ABL1" evidence="8">
    <location>
        <position position="570"/>
    </location>
</feature>
<feature type="modified residue" description="Phosphotyrosine; by ABL1" evidence="8">
    <location>
        <position position="594"/>
    </location>
</feature>
<feature type="modified residue" description="Phosphoserine" evidence="14">
    <location>
        <position position="642"/>
    </location>
</feature>
<feature type="modified residue" description="Phosphotyrosine; by ABL1" evidence="8">
    <location>
        <position position="694"/>
    </location>
</feature>
<feature type="modified residue" description="Phosphoserine" evidence="15">
    <location>
        <position position="718"/>
    </location>
</feature>
<feature type="splice variant" id="VSP_034238" description="In isoform 2." evidence="11">
    <location>
        <begin position="1"/>
        <end position="178"/>
    </location>
</feature>
<feature type="splice variant" id="VSP_034239" description="In isoform 3." evidence="12">
    <original>MAASGVPRGCDILIVYSPDAEEWCQYLQTLFLSSRQVRSQKILTHRLGPEASFSAED</original>
    <variation>MRFFTSVACYGSCLFASELLIRCKDWLKGRPALFTALLACVLYLCEWTGAKHVPGSS</variation>
    <location>
        <begin position="1"/>
        <end position="57"/>
    </location>
</feature>
<feature type="splice variant" id="VSP_034240" description="In isoform 3." evidence="12">
    <location>
        <begin position="58"/>
        <end position="458"/>
    </location>
</feature>
<feature type="sequence variant" id="VAR_044035" description="In dbSNP:rs17112076." evidence="7">
    <original>E</original>
    <variation>K</variation>
    <location>
        <position position="21"/>
    </location>
</feature>
<feature type="sequence variant" id="VAR_044036" description="In dbSNP:rs3748229." evidence="9">
    <original>A</original>
    <variation>S</variation>
    <location>
        <position position="83"/>
    </location>
</feature>
<feature type="sequence variant" id="VAR_044037" description="In dbSNP:rs3748233.">
    <original>E</original>
    <variation>K</variation>
    <location>
        <position position="551"/>
    </location>
</feature>
<feature type="sequence variant" id="VAR_044038" description="In dbSNP:rs12784975.">
    <original>K</original>
    <variation>R</variation>
    <location>
        <position position="638"/>
    </location>
</feature>
<feature type="sequence conflict" description="In Ref. 1; BAC03996." evidence="13" ref="1">
    <original>T</original>
    <variation>P</variation>
    <location>
        <position position="726"/>
    </location>
</feature>
<feature type="strand" evidence="16">
    <location>
        <begin position="12"/>
        <end position="16"/>
    </location>
</feature>
<feature type="helix" evidence="16">
    <location>
        <begin position="18"/>
        <end position="20"/>
    </location>
</feature>
<feature type="helix" evidence="16">
    <location>
        <begin position="21"/>
        <end position="33"/>
    </location>
</feature>
<feature type="turn" evidence="16">
    <location>
        <begin position="35"/>
        <end position="39"/>
    </location>
</feature>
<feature type="strand" evidence="16">
    <location>
        <begin position="42"/>
        <end position="46"/>
    </location>
</feature>
<feature type="helix" evidence="16">
    <location>
        <begin position="55"/>
        <end position="63"/>
    </location>
</feature>
<feature type="strand" evidence="16">
    <location>
        <begin position="65"/>
        <end position="71"/>
    </location>
</feature>
<feature type="helix" evidence="16">
    <location>
        <begin position="73"/>
        <end position="79"/>
    </location>
</feature>
<feature type="helix" evidence="16">
    <location>
        <begin position="85"/>
        <end position="91"/>
    </location>
</feature>
<feature type="helix" evidence="16">
    <location>
        <begin position="95"/>
        <end position="97"/>
    </location>
</feature>
<feature type="strand" evidence="16">
    <location>
        <begin position="98"/>
        <end position="104"/>
    </location>
</feature>
<feature type="helix" evidence="16">
    <location>
        <begin position="109"/>
        <end position="113"/>
    </location>
</feature>
<feature type="helix" evidence="16">
    <location>
        <begin position="118"/>
        <end position="120"/>
    </location>
</feature>
<feature type="strand" evidence="16">
    <location>
        <begin position="121"/>
        <end position="124"/>
    </location>
</feature>
<feature type="helix" evidence="16">
    <location>
        <begin position="130"/>
        <end position="138"/>
    </location>
</feature>
<feature type="strand" evidence="17">
    <location>
        <begin position="179"/>
        <end position="182"/>
    </location>
</feature>
<feature type="strand" evidence="17">
    <location>
        <begin position="184"/>
        <end position="190"/>
    </location>
</feature>
<feature type="strand" evidence="17">
    <location>
        <begin position="192"/>
        <end position="200"/>
    </location>
</feature>
<feature type="strand" evidence="17">
    <location>
        <begin position="209"/>
        <end position="213"/>
    </location>
</feature>
<feature type="strand" evidence="17">
    <location>
        <begin position="215"/>
        <end position="217"/>
    </location>
</feature>
<feature type="strand" evidence="17">
    <location>
        <begin position="220"/>
        <end position="228"/>
    </location>
</feature>
<feature type="strand" evidence="17">
    <location>
        <begin position="231"/>
        <end position="236"/>
    </location>
</feature>
<feature type="strand" evidence="17">
    <location>
        <begin position="241"/>
        <end position="252"/>
    </location>
</feature>
<feature type="strand" evidence="17">
    <location>
        <begin position="254"/>
        <end position="263"/>
    </location>
</feature>
<feature type="helix" evidence="17">
    <location>
        <begin position="265"/>
        <end position="273"/>
    </location>
</feature>
<feature type="strand" evidence="17">
    <location>
        <begin position="276"/>
        <end position="278"/>
    </location>
</feature>
<feature type="helix" evidence="17">
    <location>
        <begin position="279"/>
        <end position="286"/>
    </location>
</feature>
<comment type="function">
    <text evidence="8">Signaling adapter that contributes to B-cell development by linking B-cell receptor (BCR) signaling to the phosphoinositide 3-kinase (PI3K)-Akt signaling pathway. Has a complementary role to the BCR coreceptor CD19, coupling BCR and PI3K activation by providing a docking site for the PI3K subunit PIK3R1. Alternatively, links Toll-like receptor (TLR) signaling to PI3K activation, a process preventing excessive inflammatory cytokine production. Also involved in the activation of PI3K in natural killer cells. May be involved in the survival of mature B-cells via activation of REL.</text>
</comment>
<comment type="subunit">
    <text evidence="1">Homooligomer (By similarity). Interacts (phosphorylated on tyrosine residues within YXXM motifs) with PIK3R1 (via SH2 domain); required for BCR- and TLR-mediated activation of phosphoinositide 3-kinase. Interacts (via polyproline C-terminal region) with ABI1 (via SH3 domain); the interaction promotes phosphorylation of PIK3AP1 by ABL1. May interact with MYD88 and TIRAP (By similarity).</text>
</comment>
<comment type="interaction">
    <interactant intactId="EBI-2654168">
        <id>Q6ZUJ8</id>
    </interactant>
    <interactant intactId="EBI-401755">
        <id>P62993</id>
        <label>GRB2</label>
    </interactant>
    <organismsDiffer>false</organismsDiffer>
    <experiments>6</experiments>
</comment>
<comment type="interaction">
    <interactant intactId="EBI-11981743">
        <id>Q6ZUJ8-3</id>
    </interactant>
    <interactant intactId="EBI-389883">
        <id>P16333</id>
        <label>NCK1</label>
    </interactant>
    <organismsDiffer>false</organismsDiffer>
    <experiments>3</experiments>
</comment>
<comment type="interaction">
    <interactant intactId="EBI-11981743">
        <id>Q6ZUJ8-3</id>
    </interactant>
    <interactant intactId="EBI-713635">
        <id>O43639</id>
        <label>NCK2</label>
    </interactant>
    <organismsDiffer>false</organismsDiffer>
    <experiments>7</experiments>
</comment>
<comment type="subcellular location">
    <subcellularLocation>
        <location evidence="1">Cytoplasm</location>
    </subcellularLocation>
    <subcellularLocation>
        <location evidence="1">Cell membrane</location>
        <topology evidence="1">Peripheral membrane protein</topology>
    </subcellularLocation>
</comment>
<comment type="alternative products">
    <event type="alternative splicing"/>
    <isoform>
        <id>Q6ZUJ8-1</id>
        <name>1</name>
        <name>BCAP-L</name>
        <sequence type="displayed"/>
    </isoform>
    <isoform>
        <id>Q6ZUJ8-2</id>
        <name>2</name>
        <name>BCAP-S</name>
        <sequence type="described" ref="VSP_034238"/>
    </isoform>
    <isoform>
        <id>Q6ZUJ8-3</id>
        <name>3</name>
        <sequence type="described" ref="VSP_034239 VSP_034240"/>
    </isoform>
</comment>
<comment type="tissue specificity">
    <text evidence="10">Expressed in natural killer (NK) cells.</text>
</comment>
<comment type="domain">
    <text evidence="1">The DBB domain is required for dimerization.</text>
</comment>
<comment type="PTM">
    <text evidence="1">Constitutively phosphorylated. Phosphorylated on tyrosine residues in C-terminal region by ABL1. Phosphorylated on tyrosine residues within the YXXM motifs by BTK and SYK (By similarity). Isoform 1 and isoform 2 are phosphorylated on tyrosine residues, most likely within the YXXM motifs, via CD19 activation (By similarity). Toll-like receptor activation induces appearance of a phosphorylated form associated with membranes (By similarity).</text>
</comment>
<gene>
    <name type="primary">PIK3AP1</name>
    <name type="synonym">BCAP</name>
</gene>
<keyword id="KW-0002">3D-structure</keyword>
<keyword id="KW-0025">Alternative splicing</keyword>
<keyword id="KW-1003">Cell membrane</keyword>
<keyword id="KW-0175">Coiled coil</keyword>
<keyword id="KW-0963">Cytoplasm</keyword>
<keyword id="KW-0472">Membrane</keyword>
<keyword id="KW-0597">Phosphoprotein</keyword>
<keyword id="KW-1267">Proteomics identification</keyword>
<keyword id="KW-1185">Reference proteome</keyword>
<organism>
    <name type="scientific">Homo sapiens</name>
    <name type="common">Human</name>
    <dbReference type="NCBI Taxonomy" id="9606"/>
    <lineage>
        <taxon>Eukaryota</taxon>
        <taxon>Metazoa</taxon>
        <taxon>Chordata</taxon>
        <taxon>Craniata</taxon>
        <taxon>Vertebrata</taxon>
        <taxon>Euteleostomi</taxon>
        <taxon>Mammalia</taxon>
        <taxon>Eutheria</taxon>
        <taxon>Euarchontoglires</taxon>
        <taxon>Primates</taxon>
        <taxon>Haplorrhini</taxon>
        <taxon>Catarrhini</taxon>
        <taxon>Hominidae</taxon>
        <taxon>Homo</taxon>
    </lineage>
</organism>
<accession>Q6ZUJ8</accession>
<accession>Q5TB56</accession>
<accession>Q5VXJ9</accession>
<accession>Q8N6J6</accession>
<accession>Q8NAC8</accession>
<protein>
    <recommendedName>
        <fullName>Phosphoinositide 3-kinase adapter protein 1</fullName>
    </recommendedName>
    <alternativeName>
        <fullName>B-cell adapter for phosphoinositide 3-kinase</fullName>
    </alternativeName>
    <alternativeName>
        <fullName>B-cell phosphoinositide 3-kinase adapter protein 1</fullName>
    </alternativeName>
</protein>
<evidence type="ECO:0000250" key="1"/>
<evidence type="ECO:0000250" key="2">
    <source>
        <dbReference type="UniProtKB" id="Q9EQ32"/>
    </source>
</evidence>
<evidence type="ECO:0000255" key="3"/>
<evidence type="ECO:0000255" key="4">
    <source>
        <dbReference type="PROSITE-ProRule" id="PRU00204"/>
    </source>
</evidence>
<evidence type="ECO:0000255" key="5">
    <source>
        <dbReference type="PROSITE-ProRule" id="PRU00707"/>
    </source>
</evidence>
<evidence type="ECO:0000256" key="6">
    <source>
        <dbReference type="SAM" id="MobiDB-lite"/>
    </source>
</evidence>
<evidence type="ECO:0000269" key="7">
    <source>
    </source>
</evidence>
<evidence type="ECO:0000269" key="8">
    <source>
    </source>
</evidence>
<evidence type="ECO:0000269" key="9">
    <source>
    </source>
</evidence>
<evidence type="ECO:0000269" key="10">
    <source>
    </source>
</evidence>
<evidence type="ECO:0000303" key="11">
    <source>
    </source>
</evidence>
<evidence type="ECO:0000303" key="12">
    <source>
    </source>
</evidence>
<evidence type="ECO:0000305" key="13"/>
<evidence type="ECO:0007744" key="14">
    <source>
    </source>
</evidence>
<evidence type="ECO:0007744" key="15">
    <source>
    </source>
</evidence>
<evidence type="ECO:0007829" key="16">
    <source>
        <dbReference type="PDB" id="5FOR"/>
    </source>
</evidence>
<evidence type="ECO:0007829" key="17">
    <source>
        <dbReference type="PDB" id="6SWS"/>
    </source>
</evidence>
<proteinExistence type="evidence at protein level"/>
<sequence>MAASGVPRGCDILIVYSPDAEEWCQYLQTLFLSSRQVRSQKILTHRLGPEASFSAEDLSLFLSTRCVVVLLSAELVQHFHKPALLPLLQRAFHPPHRVVRLLCGVRDSEEFLDFFPDWAHWQELTCDDEPETYVAAVKKAISEDSGCDSVTDTEPEDEKVVSYSKQQNLPTVTSPGNLMVVQPDRIRCGAETTVYVIVRCKLDDRVATEAEFSPEDSPSVRMEAKVENEYTISVKAPNLSSGNVSLKIYSGDLVVCETVISYYTDMEEIGNLLSNAANPVEFMCQAFKIVPYNTETLDKLLTESLKNNIPASGLHLFGINQLEEEDMMTNQRDEELPTLLHFAAKYGLKNLTALLLTCPGALQAYSVANKHGHYPNTIAEKHGFRDLRQFIDEYVETVDMLKSHIKEELMHGEEADAVYESMAHLSTDLLMKCSLNPGCDEDLYESMAAFVPAATEDLYVEMLQASTSNPIPGDGFSRATKDSMIRKFLEGNSMGMTNLERDQCHLGQEEDVYHTVDDDEAFSVDLASRPPVPVPRPETTAPGAHQLPDNEPYIFKVFAEKSQERPGNFYVSSESIRKGPPVRPWRDRPQSSIYDPFAGMKTPGQRQLITLQEQVKLGIVNVDEAVLHFKEWQLNQKKRSESFRFQQENLKRLRDSITRRQREKQKSGKQTDLEITVPIRHSQHLPAKVEFGVYESGPRKSVIPPRTELRRGDWKTDSTSSTASSTSNRSSTRSLLSVSSGMEGDNEDNEVPEVTRSRSPGPPQVDGTPTMSLERPPRVPPRAASQRPPTRETFHPPPPVPPRGR</sequence>